<geneLocation type="non-photosynthetic plastid"/>
<evidence type="ECO:0000250" key="1"/>
<evidence type="ECO:0000305" key="2"/>
<name>RK5_EUGLO</name>
<reference key="1">
    <citation type="journal article" date="1990" name="Curr. Genet.">
        <title>Genes for ribosomal proteins are retained on the 73 kb DNA from Astasia longa that resembles Euglena chloroplast DNA.</title>
        <authorList>
            <person name="Siemeister G."/>
            <person name="Buchholz C."/>
            <person name="Hachtel W."/>
        </authorList>
    </citation>
    <scope>NUCLEOTIDE SEQUENCE [GENOMIC DNA]</scope>
    <source>
        <strain>CCAP 1204-17a</strain>
    </source>
</reference>
<reference key="2">
    <citation type="journal article" date="1994" name="Plant Physiol.">
        <title>Plastid ribosomal protein genes from the nonphotosynthetic flagellate Astasia longa.</title>
        <authorList>
            <person name="Gockel G."/>
            <person name="Baier S."/>
            <person name="Hachtel W."/>
        </authorList>
    </citation>
    <scope>NUCLEOTIDE SEQUENCE [GENOMIC DNA]</scope>
    <source>
        <strain>CCAP 1204-17a</strain>
    </source>
</reference>
<reference key="3">
    <citation type="journal article" date="2000" name="Protist">
        <title>Complete gene map of the plastid genome of the nonphotosynthetic euglenoid flagellate Astasia longa.</title>
        <authorList>
            <person name="Gockel G."/>
            <person name="Hachtel W."/>
        </authorList>
    </citation>
    <scope>NUCLEOTIDE SEQUENCE [LARGE SCALE GENOMIC DNA]</scope>
    <source>
        <strain>CCAP 1204-17a</strain>
    </source>
</reference>
<gene>
    <name type="primary">rpl5</name>
</gene>
<comment type="function">
    <text evidence="1">Binds 5S rRNA, forms part of the central protuberance of the 50S subunit.</text>
</comment>
<comment type="subunit">
    <text evidence="1">Part of the 50S ribosomal subunit; contacts the 5S rRNA.</text>
</comment>
<comment type="subcellular location">
    <subcellularLocation>
        <location>Plastid</location>
    </subcellularLocation>
</comment>
<comment type="similarity">
    <text evidence="2">Belongs to the universal ribosomal protein uL5 family.</text>
</comment>
<feature type="chain" id="PRO_0000125035" description="Large ribosomal subunit protein uL5c">
    <location>
        <begin position="1"/>
        <end position="179"/>
    </location>
</feature>
<dbReference type="EMBL" id="AJ294725">
    <property type="protein sequence ID" value="CAC24576.1"/>
    <property type="molecule type" value="Genomic_DNA"/>
</dbReference>
<dbReference type="PIR" id="S14150">
    <property type="entry name" value="R5IT5"/>
</dbReference>
<dbReference type="RefSeq" id="NP_074965.1">
    <property type="nucleotide sequence ID" value="NC_002652.1"/>
</dbReference>
<dbReference type="SMR" id="P14757"/>
<dbReference type="GeneID" id="802522"/>
<dbReference type="GO" id="GO:0009536">
    <property type="term" value="C:plastid"/>
    <property type="evidence" value="ECO:0007669"/>
    <property type="project" value="UniProtKB-SubCell"/>
</dbReference>
<dbReference type="GO" id="GO:1990904">
    <property type="term" value="C:ribonucleoprotein complex"/>
    <property type="evidence" value="ECO:0007669"/>
    <property type="project" value="UniProtKB-KW"/>
</dbReference>
<dbReference type="GO" id="GO:0005840">
    <property type="term" value="C:ribosome"/>
    <property type="evidence" value="ECO:0007669"/>
    <property type="project" value="UniProtKB-KW"/>
</dbReference>
<dbReference type="GO" id="GO:0019843">
    <property type="term" value="F:rRNA binding"/>
    <property type="evidence" value="ECO:0007669"/>
    <property type="project" value="UniProtKB-KW"/>
</dbReference>
<dbReference type="GO" id="GO:0003735">
    <property type="term" value="F:structural constituent of ribosome"/>
    <property type="evidence" value="ECO:0007669"/>
    <property type="project" value="InterPro"/>
</dbReference>
<dbReference type="GO" id="GO:0006412">
    <property type="term" value="P:translation"/>
    <property type="evidence" value="ECO:0007669"/>
    <property type="project" value="InterPro"/>
</dbReference>
<dbReference type="FunFam" id="3.30.1440.10:FF:000001">
    <property type="entry name" value="50S ribosomal protein L5"/>
    <property type="match status" value="1"/>
</dbReference>
<dbReference type="Gene3D" id="3.30.1440.10">
    <property type="match status" value="1"/>
</dbReference>
<dbReference type="HAMAP" id="MF_01333_B">
    <property type="entry name" value="Ribosomal_uL5_B"/>
    <property type="match status" value="1"/>
</dbReference>
<dbReference type="InterPro" id="IPR002132">
    <property type="entry name" value="Ribosomal_uL5"/>
</dbReference>
<dbReference type="InterPro" id="IPR020930">
    <property type="entry name" value="Ribosomal_uL5_bac-type"/>
</dbReference>
<dbReference type="InterPro" id="IPR031309">
    <property type="entry name" value="Ribosomal_uL5_C"/>
</dbReference>
<dbReference type="InterPro" id="IPR020929">
    <property type="entry name" value="Ribosomal_uL5_CS"/>
</dbReference>
<dbReference type="InterPro" id="IPR022803">
    <property type="entry name" value="Ribosomal_uL5_dom_sf"/>
</dbReference>
<dbReference type="InterPro" id="IPR031310">
    <property type="entry name" value="Ribosomal_uL5_N"/>
</dbReference>
<dbReference type="NCBIfam" id="NF000585">
    <property type="entry name" value="PRK00010.1"/>
    <property type="match status" value="1"/>
</dbReference>
<dbReference type="PANTHER" id="PTHR11994">
    <property type="entry name" value="60S RIBOSOMAL PROTEIN L11-RELATED"/>
    <property type="match status" value="1"/>
</dbReference>
<dbReference type="Pfam" id="PF00281">
    <property type="entry name" value="Ribosomal_L5"/>
    <property type="match status" value="1"/>
</dbReference>
<dbReference type="Pfam" id="PF00673">
    <property type="entry name" value="Ribosomal_L5_C"/>
    <property type="match status" value="1"/>
</dbReference>
<dbReference type="PIRSF" id="PIRSF002161">
    <property type="entry name" value="Ribosomal_L5"/>
    <property type="match status" value="1"/>
</dbReference>
<dbReference type="SUPFAM" id="SSF55282">
    <property type="entry name" value="RL5-like"/>
    <property type="match status" value="1"/>
</dbReference>
<dbReference type="PROSITE" id="PS00358">
    <property type="entry name" value="RIBOSOMAL_L5"/>
    <property type="match status" value="1"/>
</dbReference>
<proteinExistence type="inferred from homology"/>
<accession>P14757</accession>
<keyword id="KW-0934">Plastid</keyword>
<keyword id="KW-0687">Ribonucleoprotein</keyword>
<keyword id="KW-0689">Ribosomal protein</keyword>
<keyword id="KW-0694">RNA-binding</keyword>
<keyword id="KW-0699">rRNA-binding</keyword>
<sequence length="179" mass="20161">MQKLKSIYITKVCPILVNEFLYTNFFEIPKINKVVISRGFGESCNSSKILESLLVELKNISGQKPILCKSKNSISNFKVKKGMPIGMFVTLHGDKMYSFLDRLINLSFPRMRDFNGLNIKGFDGFGNYNVGLSEQSIFPEIEYSSILKNKGMNITIVTTAKTDLESFSLLKGLGFPFCV</sequence>
<organism>
    <name type="scientific">Euglena longa</name>
    <name type="common">Euglenophycean alga</name>
    <name type="synonym">Astasia longa</name>
    <dbReference type="NCBI Taxonomy" id="3037"/>
    <lineage>
        <taxon>Eukaryota</taxon>
        <taxon>Discoba</taxon>
        <taxon>Euglenozoa</taxon>
        <taxon>Euglenida</taxon>
        <taxon>Spirocuta</taxon>
        <taxon>Euglenophyceae</taxon>
        <taxon>Euglenales</taxon>
        <taxon>Euglenaceae</taxon>
        <taxon>Euglena</taxon>
    </lineage>
</organism>
<protein>
    <recommendedName>
        <fullName evidence="2">Large ribosomal subunit protein uL5c</fullName>
    </recommendedName>
    <alternativeName>
        <fullName>50S ribosomal protein L5, plastid</fullName>
    </alternativeName>
</protein>